<name>Y1333_CLOPE</name>
<dbReference type="EMBL" id="BA000016">
    <property type="protein sequence ID" value="BAB81039.1"/>
    <property type="molecule type" value="Genomic_DNA"/>
</dbReference>
<dbReference type="RefSeq" id="WP_011010392.1">
    <property type="nucleotide sequence ID" value="NC_003366.1"/>
</dbReference>
<dbReference type="SMR" id="Q8XKR1"/>
<dbReference type="STRING" id="195102.gene:10490596"/>
<dbReference type="KEGG" id="cpe:CPE1333"/>
<dbReference type="HOGENOM" id="CLU_049702_2_0_9"/>
<dbReference type="Proteomes" id="UP000000818">
    <property type="component" value="Chromosome"/>
</dbReference>
<dbReference type="CDD" id="cd00198">
    <property type="entry name" value="vWFA"/>
    <property type="match status" value="1"/>
</dbReference>
<dbReference type="Gene3D" id="3.40.50.410">
    <property type="entry name" value="von Willebrand factor, type A domain"/>
    <property type="match status" value="1"/>
</dbReference>
<dbReference type="HAMAP" id="MF_01232">
    <property type="entry name" value="UPF0229"/>
    <property type="match status" value="1"/>
</dbReference>
<dbReference type="InterPro" id="IPR014230">
    <property type="entry name" value="Spore_YhbH"/>
</dbReference>
<dbReference type="InterPro" id="IPR006698">
    <property type="entry name" value="UPF0229"/>
</dbReference>
<dbReference type="InterPro" id="IPR036465">
    <property type="entry name" value="vWFA_dom_sf"/>
</dbReference>
<dbReference type="NCBIfam" id="TIGR02877">
    <property type="entry name" value="spore_yhbH"/>
    <property type="match status" value="1"/>
</dbReference>
<dbReference type="PANTHER" id="PTHR30510">
    <property type="entry name" value="UPF0229 PROTEIN YEAH"/>
    <property type="match status" value="1"/>
</dbReference>
<dbReference type="PANTHER" id="PTHR30510:SF2">
    <property type="entry name" value="UPF0229 PROTEIN YEAH"/>
    <property type="match status" value="1"/>
</dbReference>
<dbReference type="Pfam" id="PF04285">
    <property type="entry name" value="DUF444"/>
    <property type="match status" value="2"/>
</dbReference>
<dbReference type="SUPFAM" id="SSF53300">
    <property type="entry name" value="vWA-like"/>
    <property type="match status" value="1"/>
</dbReference>
<protein>
    <recommendedName>
        <fullName evidence="1">UPF0229 protein CPE1333</fullName>
    </recommendedName>
</protein>
<reference key="1">
    <citation type="journal article" date="2002" name="Proc. Natl. Acad. Sci. U.S.A.">
        <title>Complete genome sequence of Clostridium perfringens, an anaerobic flesh-eater.</title>
        <authorList>
            <person name="Shimizu T."/>
            <person name="Ohtani K."/>
            <person name="Hirakawa H."/>
            <person name="Ohshima K."/>
            <person name="Yamashita A."/>
            <person name="Shiba T."/>
            <person name="Ogasawara N."/>
            <person name="Hattori M."/>
            <person name="Kuhara S."/>
            <person name="Hayashi H."/>
        </authorList>
    </citation>
    <scope>NUCLEOTIDE SEQUENCE [LARGE SCALE GENOMIC DNA]</scope>
    <source>
        <strain>13 / Type A</strain>
    </source>
</reference>
<feature type="chain" id="PRO_0000068194" description="UPF0229 protein CPE1333">
    <location>
        <begin position="1"/>
        <end position="392"/>
    </location>
</feature>
<feature type="region of interest" description="Disordered" evidence="2">
    <location>
        <begin position="75"/>
        <end position="100"/>
    </location>
</feature>
<feature type="compositionally biased region" description="Basic and acidic residues" evidence="2">
    <location>
        <begin position="80"/>
        <end position="94"/>
    </location>
</feature>
<gene>
    <name type="ordered locus">CPE1333</name>
</gene>
<proteinExistence type="inferred from homology"/>
<keyword id="KW-1185">Reference proteome</keyword>
<evidence type="ECO:0000255" key="1">
    <source>
        <dbReference type="HAMAP-Rule" id="MF_01232"/>
    </source>
</evidence>
<evidence type="ECO:0000256" key="2">
    <source>
        <dbReference type="SAM" id="MobiDB-lite"/>
    </source>
</evidence>
<accession>Q8XKR1</accession>
<comment type="similarity">
    <text evidence="1">Belongs to the UPF0229 family.</text>
</comment>
<organism>
    <name type="scientific">Clostridium perfringens (strain 13 / Type A)</name>
    <dbReference type="NCBI Taxonomy" id="195102"/>
    <lineage>
        <taxon>Bacteria</taxon>
        <taxon>Bacillati</taxon>
        <taxon>Bacillota</taxon>
        <taxon>Clostridia</taxon>
        <taxon>Eubacteriales</taxon>
        <taxon>Clostridiaceae</taxon>
        <taxon>Clostridium</taxon>
    </lineage>
</organism>
<sequence>MAIFRDQAENHVEHDRSIEDRRRHRQLVEKSIKENLGDILSEESIIGETKNKKYKIPIRGIKEYQFIYGANNKGVTTGTGEERRGDRISSDKRKAISNNKAGNQEGKDIYETEITLEELMDYIVEDLDLPNLDRKKYSEIIVESAAKKRGYQKYGVRPRLAKKKTVMCKIARKQGKKRALREIGEEAEIGRFPFREDDLRYYKVKKHPKKESNAVMIFIMDVSGSMDNTKKYLARSFFFVLSRFIRRKYNNVAFEFISHTTTAKNVNEYEFFHKGESGGTYISSGINAAIDLIKEKYNPGVWNIYPFYASDGDNWSEDNEKAMEAVNEISDLSNMFGYIELLPSTYSTTMFYRFKKEISKENFVSVTVKEKKDLWNAIKYMLSEELQEKNKE</sequence>